<name>PP350_ARATH</name>
<sequence length="804" mass="90786">MAATLLSQCYRIYNSDACKCVSSENHQTTGKRNGNRNLEFDSGISKPARLVLRDRYKVTKQVNDPALTRALRGFADSRLMEDALQLFDEMNKADAFLWNVMIKGFTSCGLYIEAVQFYSRMVFAGVKADTFTYPFVIKSVAGISSLEEGKKIHAMVIKLGFVSDVYVCNSLISLYMKLGCAWDAEKVFEEMPERDIVSWNSMISGYLALGDGFSSLMLFKEMLKCGFKPDRFSTMSALGACSHVYSPKMGKEIHCHAVRSRIETGDVMVMTSILDMYSKYGEVSYAERIFNGMIQRNIVAWNVMIGCYARNGRVTDAFLCFQKMSEQNGLQPDVITSINLLPASAILEGRTIHGYAMRRGFLPHMVLETALIDMYGECGQLKSAEVIFDRMAEKNVISWNSIIAAYVQNGKNYSALELFQELWDSSLVPDSTTIASILPAYAESLSLSEGREIHAYIVKSRYWSNTIILNSLVHMYAMCGDLEDARKCFNHILLKDVVSWNSIIMAYAVHGFGRISVWLFSEMIASRVNPNKSTFASLLAACSISGMVDEGWEYFESMKREYGIDPGIEHYGCMLDLIGRTGNFSAAKRFLEEMPFVPTARIWGSLLNASRNHKDITIAEFAAEQIFKMEHDNTGCYVLLLNMYAEAGRWEDVNRIKLLMESKGISRTSSRSTVEAKGKSHVFTNGDRSHVATNKIYEVLDVVSRMVGEEDIYVHCVSRLRPETLVKSRSNSPRRHSVRLATCFGLISTETGRRVTVRNNTRICRKCHEFLEKASRLTRREIVVGDSKIFHHFSNGRCSCGNYW</sequence>
<keyword id="KW-0150">Chloroplast</keyword>
<keyword id="KW-0934">Plastid</keyword>
<keyword id="KW-1185">Reference proteome</keyword>
<keyword id="KW-0677">Repeat</keyword>
<keyword id="KW-0809">Transit peptide</keyword>
<evidence type="ECO:0000255" key="1"/>
<evidence type="ECO:0000305" key="2"/>
<comment type="subcellular location">
    <subcellularLocation>
        <location evidence="2">Plastid</location>
        <location evidence="2">Chloroplast</location>
    </subcellularLocation>
</comment>
<comment type="similarity">
    <text evidence="2">Belongs to the PPR family. PCMP-H subfamily.</text>
</comment>
<comment type="online information" name="Pentatricopeptide repeat proteins">
    <link uri="https://ppr.plantenergy.uwa.edu.au"/>
</comment>
<proteinExistence type="inferred from homology"/>
<dbReference type="EMBL" id="AL022023">
    <property type="protein sequence ID" value="CAA17777.1"/>
    <property type="molecule type" value="Genomic_DNA"/>
</dbReference>
<dbReference type="EMBL" id="AL161586">
    <property type="protein sequence ID" value="CAB80230.1"/>
    <property type="molecule type" value="Genomic_DNA"/>
</dbReference>
<dbReference type="EMBL" id="CP002687">
    <property type="protein sequence ID" value="AEE86471.1"/>
    <property type="molecule type" value="Genomic_DNA"/>
</dbReference>
<dbReference type="PIR" id="T05783">
    <property type="entry name" value="T05783"/>
</dbReference>
<dbReference type="RefSeq" id="NP_195239.1">
    <property type="nucleotide sequence ID" value="NM_119679.2"/>
</dbReference>
<dbReference type="SMR" id="O49619"/>
<dbReference type="FunCoup" id="O49619">
    <property type="interactions" value="70"/>
</dbReference>
<dbReference type="GlyGen" id="O49619">
    <property type="glycosylation" value="1 site"/>
</dbReference>
<dbReference type="PaxDb" id="3702-AT4G35130.1"/>
<dbReference type="ProteomicsDB" id="249244"/>
<dbReference type="EnsemblPlants" id="AT4G35130.1">
    <property type="protein sequence ID" value="AT4G35130.1"/>
    <property type="gene ID" value="AT4G35130"/>
</dbReference>
<dbReference type="GeneID" id="829665"/>
<dbReference type="Gramene" id="AT4G35130.1">
    <property type="protein sequence ID" value="AT4G35130.1"/>
    <property type="gene ID" value="AT4G35130"/>
</dbReference>
<dbReference type="KEGG" id="ath:AT4G35130"/>
<dbReference type="Araport" id="AT4G35130"/>
<dbReference type="TAIR" id="AT4G35130"/>
<dbReference type="eggNOG" id="KOG4197">
    <property type="taxonomic scope" value="Eukaryota"/>
</dbReference>
<dbReference type="HOGENOM" id="CLU_002706_15_1_1"/>
<dbReference type="InParanoid" id="O49619"/>
<dbReference type="OMA" id="FDCFMQM"/>
<dbReference type="OrthoDB" id="185373at2759"/>
<dbReference type="PhylomeDB" id="O49619"/>
<dbReference type="PRO" id="PR:O49619"/>
<dbReference type="Proteomes" id="UP000006548">
    <property type="component" value="Chromosome 4"/>
</dbReference>
<dbReference type="ExpressionAtlas" id="O49619">
    <property type="expression patterns" value="baseline and differential"/>
</dbReference>
<dbReference type="GO" id="GO:0009507">
    <property type="term" value="C:chloroplast"/>
    <property type="evidence" value="ECO:0007669"/>
    <property type="project" value="UniProtKB-SubCell"/>
</dbReference>
<dbReference type="GO" id="GO:0003723">
    <property type="term" value="F:RNA binding"/>
    <property type="evidence" value="ECO:0007669"/>
    <property type="project" value="InterPro"/>
</dbReference>
<dbReference type="GO" id="GO:0008270">
    <property type="term" value="F:zinc ion binding"/>
    <property type="evidence" value="ECO:0007669"/>
    <property type="project" value="InterPro"/>
</dbReference>
<dbReference type="GO" id="GO:0009451">
    <property type="term" value="P:RNA modification"/>
    <property type="evidence" value="ECO:0007669"/>
    <property type="project" value="InterPro"/>
</dbReference>
<dbReference type="FunFam" id="1.25.40.10:FF:001771">
    <property type="entry name" value="Pentatricopeptide repeat-containing protein At3g26782, mitochondrial"/>
    <property type="match status" value="1"/>
</dbReference>
<dbReference type="FunFam" id="1.25.40.10:FF:000725">
    <property type="entry name" value="Pentatricopeptide repeat-containing protein At3g63370, chloroplastic"/>
    <property type="match status" value="2"/>
</dbReference>
<dbReference type="FunFam" id="1.25.40.10:FF:003435">
    <property type="entry name" value="Pentatricopeptide repeat-containing protein At4g35130, chloroplastic"/>
    <property type="match status" value="1"/>
</dbReference>
<dbReference type="FunFam" id="1.25.40.10:FF:000201">
    <property type="entry name" value="Pentatricopeptide repeat-containing protein mitochondrial"/>
    <property type="match status" value="1"/>
</dbReference>
<dbReference type="Gene3D" id="1.25.40.10">
    <property type="entry name" value="Tetratricopeptide repeat domain"/>
    <property type="match status" value="6"/>
</dbReference>
<dbReference type="InterPro" id="IPR032867">
    <property type="entry name" value="DYW_dom"/>
</dbReference>
<dbReference type="InterPro" id="IPR046848">
    <property type="entry name" value="E_motif"/>
</dbReference>
<dbReference type="InterPro" id="IPR002885">
    <property type="entry name" value="Pentatricopeptide_rpt"/>
</dbReference>
<dbReference type="InterPro" id="IPR046960">
    <property type="entry name" value="PPR_At4g14850-like_plant"/>
</dbReference>
<dbReference type="InterPro" id="IPR011990">
    <property type="entry name" value="TPR-like_helical_dom_sf"/>
</dbReference>
<dbReference type="NCBIfam" id="TIGR00756">
    <property type="entry name" value="PPR"/>
    <property type="match status" value="6"/>
</dbReference>
<dbReference type="PANTHER" id="PTHR24015:SF1832">
    <property type="entry name" value="OS03G0241800 PROTEIN"/>
    <property type="match status" value="1"/>
</dbReference>
<dbReference type="PANTHER" id="PTHR24015">
    <property type="entry name" value="OS07G0578800 PROTEIN-RELATED"/>
    <property type="match status" value="1"/>
</dbReference>
<dbReference type="Pfam" id="PF14432">
    <property type="entry name" value="DYW_deaminase"/>
    <property type="match status" value="1"/>
</dbReference>
<dbReference type="Pfam" id="PF20431">
    <property type="entry name" value="E_motif"/>
    <property type="match status" value="1"/>
</dbReference>
<dbReference type="Pfam" id="PF01535">
    <property type="entry name" value="PPR"/>
    <property type="match status" value="4"/>
</dbReference>
<dbReference type="Pfam" id="PF13041">
    <property type="entry name" value="PPR_2"/>
    <property type="match status" value="4"/>
</dbReference>
<dbReference type="SUPFAM" id="SSF48452">
    <property type="entry name" value="TPR-like"/>
    <property type="match status" value="1"/>
</dbReference>
<dbReference type="PROSITE" id="PS51375">
    <property type="entry name" value="PPR"/>
    <property type="match status" value="15"/>
</dbReference>
<accession>O49619</accession>
<gene>
    <name type="primary">PCMP-H27</name>
    <name type="ordered locus">At4g35130</name>
    <name type="ORF">M4E13.180</name>
</gene>
<organism>
    <name type="scientific">Arabidopsis thaliana</name>
    <name type="common">Mouse-ear cress</name>
    <dbReference type="NCBI Taxonomy" id="3702"/>
    <lineage>
        <taxon>Eukaryota</taxon>
        <taxon>Viridiplantae</taxon>
        <taxon>Streptophyta</taxon>
        <taxon>Embryophyta</taxon>
        <taxon>Tracheophyta</taxon>
        <taxon>Spermatophyta</taxon>
        <taxon>Magnoliopsida</taxon>
        <taxon>eudicotyledons</taxon>
        <taxon>Gunneridae</taxon>
        <taxon>Pentapetalae</taxon>
        <taxon>rosids</taxon>
        <taxon>malvids</taxon>
        <taxon>Brassicales</taxon>
        <taxon>Brassicaceae</taxon>
        <taxon>Camelineae</taxon>
        <taxon>Arabidopsis</taxon>
    </lineage>
</organism>
<protein>
    <recommendedName>
        <fullName>Pentatricopeptide repeat-containing protein At4g35130, chloroplastic</fullName>
    </recommendedName>
</protein>
<feature type="transit peptide" description="Chloroplast" evidence="1">
    <location>
        <begin position="1"/>
        <end position="19"/>
    </location>
</feature>
<feature type="chain" id="PRO_0000363467" description="Pentatricopeptide repeat-containing protein At4g35130, chloroplastic">
    <location>
        <begin position="20"/>
        <end position="804"/>
    </location>
</feature>
<feature type="repeat" description="PPR 1">
    <location>
        <begin position="63"/>
        <end position="93"/>
    </location>
</feature>
<feature type="repeat" description="PPR 2">
    <location>
        <begin position="94"/>
        <end position="128"/>
    </location>
</feature>
<feature type="repeat" description="PPR 3">
    <location>
        <begin position="129"/>
        <end position="163"/>
    </location>
</feature>
<feature type="repeat" description="PPR 4">
    <location>
        <begin position="164"/>
        <end position="194"/>
    </location>
</feature>
<feature type="repeat" description="PPR 5">
    <location>
        <begin position="195"/>
        <end position="229"/>
    </location>
</feature>
<feature type="repeat" description="PPR 6">
    <location>
        <begin position="230"/>
        <end position="264"/>
    </location>
</feature>
<feature type="repeat" description="PPR 7">
    <location>
        <begin position="266"/>
        <end position="296"/>
    </location>
</feature>
<feature type="repeat" description="PPR 8">
    <location>
        <begin position="297"/>
        <end position="332"/>
    </location>
</feature>
<feature type="repeat" description="PPR 9">
    <location>
        <begin position="333"/>
        <end position="363"/>
    </location>
</feature>
<feature type="repeat" description="PPR 10">
    <location>
        <begin position="364"/>
        <end position="394"/>
    </location>
</feature>
<feature type="repeat" description="PPR 11">
    <location>
        <begin position="395"/>
        <end position="429"/>
    </location>
</feature>
<feature type="repeat" description="PPR 12">
    <location>
        <begin position="430"/>
        <end position="464"/>
    </location>
</feature>
<feature type="repeat" description="PPR 13">
    <location>
        <begin position="465"/>
        <end position="495"/>
    </location>
</feature>
<feature type="repeat" description="PPR 14">
    <location>
        <begin position="496"/>
        <end position="530"/>
    </location>
</feature>
<feature type="repeat" description="PPR 15">
    <location>
        <begin position="531"/>
        <end position="561"/>
    </location>
</feature>
<feature type="repeat" description="PPR 16">
    <location>
        <begin position="567"/>
        <end position="597"/>
    </location>
</feature>
<feature type="region of interest" description="Type E motif">
    <location>
        <begin position="602"/>
        <end position="677"/>
    </location>
</feature>
<feature type="region of interest" description="Type E(+) motif">
    <location>
        <begin position="678"/>
        <end position="708"/>
    </location>
</feature>
<feature type="region of interest" description="Type DYW motif">
    <location>
        <begin position="710"/>
        <end position="804"/>
    </location>
</feature>
<reference key="1">
    <citation type="journal article" date="1999" name="Nature">
        <title>Sequence and analysis of chromosome 4 of the plant Arabidopsis thaliana.</title>
        <authorList>
            <person name="Mayer K.F.X."/>
            <person name="Schueller C."/>
            <person name="Wambutt R."/>
            <person name="Murphy G."/>
            <person name="Volckaert G."/>
            <person name="Pohl T."/>
            <person name="Duesterhoeft A."/>
            <person name="Stiekema W."/>
            <person name="Entian K.-D."/>
            <person name="Terryn N."/>
            <person name="Harris B."/>
            <person name="Ansorge W."/>
            <person name="Brandt P."/>
            <person name="Grivell L.A."/>
            <person name="Rieger M."/>
            <person name="Weichselgartner M."/>
            <person name="de Simone V."/>
            <person name="Obermaier B."/>
            <person name="Mache R."/>
            <person name="Mueller M."/>
            <person name="Kreis M."/>
            <person name="Delseny M."/>
            <person name="Puigdomenech P."/>
            <person name="Watson M."/>
            <person name="Schmidtheini T."/>
            <person name="Reichert B."/>
            <person name="Portetelle D."/>
            <person name="Perez-Alonso M."/>
            <person name="Boutry M."/>
            <person name="Bancroft I."/>
            <person name="Vos P."/>
            <person name="Hoheisel J."/>
            <person name="Zimmermann W."/>
            <person name="Wedler H."/>
            <person name="Ridley P."/>
            <person name="Langham S.-A."/>
            <person name="McCullagh B."/>
            <person name="Bilham L."/>
            <person name="Robben J."/>
            <person name="van der Schueren J."/>
            <person name="Grymonprez B."/>
            <person name="Chuang Y.-J."/>
            <person name="Vandenbussche F."/>
            <person name="Braeken M."/>
            <person name="Weltjens I."/>
            <person name="Voet M."/>
            <person name="Bastiaens I."/>
            <person name="Aert R."/>
            <person name="Defoor E."/>
            <person name="Weitzenegger T."/>
            <person name="Bothe G."/>
            <person name="Ramsperger U."/>
            <person name="Hilbert H."/>
            <person name="Braun M."/>
            <person name="Holzer E."/>
            <person name="Brandt A."/>
            <person name="Peters S."/>
            <person name="van Staveren M."/>
            <person name="Dirkse W."/>
            <person name="Mooijman P."/>
            <person name="Klein Lankhorst R."/>
            <person name="Rose M."/>
            <person name="Hauf J."/>
            <person name="Koetter P."/>
            <person name="Berneiser S."/>
            <person name="Hempel S."/>
            <person name="Feldpausch M."/>
            <person name="Lamberth S."/>
            <person name="Van den Daele H."/>
            <person name="De Keyser A."/>
            <person name="Buysshaert C."/>
            <person name="Gielen J."/>
            <person name="Villarroel R."/>
            <person name="De Clercq R."/>
            <person name="van Montagu M."/>
            <person name="Rogers J."/>
            <person name="Cronin A."/>
            <person name="Quail M.A."/>
            <person name="Bray-Allen S."/>
            <person name="Clark L."/>
            <person name="Doggett J."/>
            <person name="Hall S."/>
            <person name="Kay M."/>
            <person name="Lennard N."/>
            <person name="McLay K."/>
            <person name="Mayes R."/>
            <person name="Pettett A."/>
            <person name="Rajandream M.A."/>
            <person name="Lyne M."/>
            <person name="Benes V."/>
            <person name="Rechmann S."/>
            <person name="Borkova D."/>
            <person name="Bloecker H."/>
            <person name="Scharfe M."/>
            <person name="Grimm M."/>
            <person name="Loehnert T.-H."/>
            <person name="Dose S."/>
            <person name="de Haan M."/>
            <person name="Maarse A.C."/>
            <person name="Schaefer M."/>
            <person name="Mueller-Auer S."/>
            <person name="Gabel C."/>
            <person name="Fuchs M."/>
            <person name="Fartmann B."/>
            <person name="Granderath K."/>
            <person name="Dauner D."/>
            <person name="Herzl A."/>
            <person name="Neumann S."/>
            <person name="Argiriou A."/>
            <person name="Vitale D."/>
            <person name="Liguori R."/>
            <person name="Piravandi E."/>
            <person name="Massenet O."/>
            <person name="Quigley F."/>
            <person name="Clabauld G."/>
            <person name="Muendlein A."/>
            <person name="Felber R."/>
            <person name="Schnabl S."/>
            <person name="Hiller R."/>
            <person name="Schmidt W."/>
            <person name="Lecharny A."/>
            <person name="Aubourg S."/>
            <person name="Chefdor F."/>
            <person name="Cooke R."/>
            <person name="Berger C."/>
            <person name="Monfort A."/>
            <person name="Casacuberta E."/>
            <person name="Gibbons T."/>
            <person name="Weber N."/>
            <person name="Vandenbol M."/>
            <person name="Bargues M."/>
            <person name="Terol J."/>
            <person name="Torres A."/>
            <person name="Perez-Perez A."/>
            <person name="Purnelle B."/>
            <person name="Bent E."/>
            <person name="Johnson S."/>
            <person name="Tacon D."/>
            <person name="Jesse T."/>
            <person name="Heijnen L."/>
            <person name="Schwarz S."/>
            <person name="Scholler P."/>
            <person name="Heber S."/>
            <person name="Francs P."/>
            <person name="Bielke C."/>
            <person name="Frishman D."/>
            <person name="Haase D."/>
            <person name="Lemcke K."/>
            <person name="Mewes H.-W."/>
            <person name="Stocker S."/>
            <person name="Zaccaria P."/>
            <person name="Bevan M."/>
            <person name="Wilson R.K."/>
            <person name="de la Bastide M."/>
            <person name="Habermann K."/>
            <person name="Parnell L."/>
            <person name="Dedhia N."/>
            <person name="Gnoj L."/>
            <person name="Schutz K."/>
            <person name="Huang E."/>
            <person name="Spiegel L."/>
            <person name="Sekhon M."/>
            <person name="Murray J."/>
            <person name="Sheet P."/>
            <person name="Cordes M."/>
            <person name="Abu-Threideh J."/>
            <person name="Stoneking T."/>
            <person name="Kalicki J."/>
            <person name="Graves T."/>
            <person name="Harmon G."/>
            <person name="Edwards J."/>
            <person name="Latreille P."/>
            <person name="Courtney L."/>
            <person name="Cloud J."/>
            <person name="Abbott A."/>
            <person name="Scott K."/>
            <person name="Johnson D."/>
            <person name="Minx P."/>
            <person name="Bentley D."/>
            <person name="Fulton B."/>
            <person name="Miller N."/>
            <person name="Greco T."/>
            <person name="Kemp K."/>
            <person name="Kramer J."/>
            <person name="Fulton L."/>
            <person name="Mardis E."/>
            <person name="Dante M."/>
            <person name="Pepin K."/>
            <person name="Hillier L.W."/>
            <person name="Nelson J."/>
            <person name="Spieth J."/>
            <person name="Ryan E."/>
            <person name="Andrews S."/>
            <person name="Geisel C."/>
            <person name="Layman D."/>
            <person name="Du H."/>
            <person name="Ali J."/>
            <person name="Berghoff A."/>
            <person name="Jones K."/>
            <person name="Drone K."/>
            <person name="Cotton M."/>
            <person name="Joshu C."/>
            <person name="Antonoiu B."/>
            <person name="Zidanic M."/>
            <person name="Strong C."/>
            <person name="Sun H."/>
            <person name="Lamar B."/>
            <person name="Yordan C."/>
            <person name="Ma P."/>
            <person name="Zhong J."/>
            <person name="Preston R."/>
            <person name="Vil D."/>
            <person name="Shekher M."/>
            <person name="Matero A."/>
            <person name="Shah R."/>
            <person name="Swaby I.K."/>
            <person name="O'Shaughnessy A."/>
            <person name="Rodriguez M."/>
            <person name="Hoffman J."/>
            <person name="Till S."/>
            <person name="Granat S."/>
            <person name="Shohdy N."/>
            <person name="Hasegawa A."/>
            <person name="Hameed A."/>
            <person name="Lodhi M."/>
            <person name="Johnson A."/>
            <person name="Chen E."/>
            <person name="Marra M.A."/>
            <person name="Martienssen R."/>
            <person name="McCombie W.R."/>
        </authorList>
    </citation>
    <scope>NUCLEOTIDE SEQUENCE [LARGE SCALE GENOMIC DNA]</scope>
    <source>
        <strain>cv. Columbia</strain>
    </source>
</reference>
<reference key="2">
    <citation type="journal article" date="2017" name="Plant J.">
        <title>Araport11: a complete reannotation of the Arabidopsis thaliana reference genome.</title>
        <authorList>
            <person name="Cheng C.Y."/>
            <person name="Krishnakumar V."/>
            <person name="Chan A.P."/>
            <person name="Thibaud-Nissen F."/>
            <person name="Schobel S."/>
            <person name="Town C.D."/>
        </authorList>
    </citation>
    <scope>GENOME REANNOTATION</scope>
    <source>
        <strain>cv. Columbia</strain>
    </source>
</reference>
<reference key="3">
    <citation type="journal article" date="2000" name="Plant Mol. Biol.">
        <title>In Arabidopsis thaliana, 1% of the genome codes for a novel protein family unique to plants.</title>
        <authorList>
            <person name="Aubourg S."/>
            <person name="Boudet N."/>
            <person name="Kreis M."/>
            <person name="Lecharny A."/>
        </authorList>
    </citation>
    <scope>GENE FAMILY</scope>
</reference>
<reference key="4">
    <citation type="journal article" date="2004" name="Plant Cell">
        <title>Genome-wide analysis of Arabidopsis pentatricopeptide repeat proteins reveals their essential role in organelle biogenesis.</title>
        <authorList>
            <person name="Lurin C."/>
            <person name="Andres C."/>
            <person name="Aubourg S."/>
            <person name="Bellaoui M."/>
            <person name="Bitton F."/>
            <person name="Bruyere C."/>
            <person name="Caboche M."/>
            <person name="Debast C."/>
            <person name="Gualberto J."/>
            <person name="Hoffmann B."/>
            <person name="Lecharny A."/>
            <person name="Le Ret M."/>
            <person name="Martin-Magniette M.-L."/>
            <person name="Mireau H."/>
            <person name="Peeters N."/>
            <person name="Renou J.-P."/>
            <person name="Szurek B."/>
            <person name="Taconnat L."/>
            <person name="Small I."/>
        </authorList>
    </citation>
    <scope>GENE FAMILY</scope>
</reference>